<dbReference type="EMBL" id="AM920689">
    <property type="protein sequence ID" value="CAP52823.1"/>
    <property type="molecule type" value="Genomic_DNA"/>
</dbReference>
<dbReference type="SMR" id="B0RU81"/>
<dbReference type="KEGG" id="xca:xcc-b100_3458"/>
<dbReference type="HOGENOM" id="CLU_041575_5_2_6"/>
<dbReference type="Proteomes" id="UP000001188">
    <property type="component" value="Chromosome"/>
</dbReference>
<dbReference type="GO" id="GO:1990904">
    <property type="term" value="C:ribonucleoprotein complex"/>
    <property type="evidence" value="ECO:0007669"/>
    <property type="project" value="UniProtKB-KW"/>
</dbReference>
<dbReference type="GO" id="GO:0005840">
    <property type="term" value="C:ribosome"/>
    <property type="evidence" value="ECO:0007669"/>
    <property type="project" value="UniProtKB-KW"/>
</dbReference>
<dbReference type="GO" id="GO:0019843">
    <property type="term" value="F:rRNA binding"/>
    <property type="evidence" value="ECO:0007669"/>
    <property type="project" value="UniProtKB-UniRule"/>
</dbReference>
<dbReference type="GO" id="GO:0003735">
    <property type="term" value="F:structural constituent of ribosome"/>
    <property type="evidence" value="ECO:0007669"/>
    <property type="project" value="InterPro"/>
</dbReference>
<dbReference type="GO" id="GO:0006412">
    <property type="term" value="P:translation"/>
    <property type="evidence" value="ECO:0007669"/>
    <property type="project" value="UniProtKB-UniRule"/>
</dbReference>
<dbReference type="FunFam" id="3.40.1370.10:FF:000007">
    <property type="entry name" value="50S ribosomal protein L4"/>
    <property type="match status" value="1"/>
</dbReference>
<dbReference type="Gene3D" id="3.40.1370.10">
    <property type="match status" value="1"/>
</dbReference>
<dbReference type="HAMAP" id="MF_01328_B">
    <property type="entry name" value="Ribosomal_uL4_B"/>
    <property type="match status" value="1"/>
</dbReference>
<dbReference type="InterPro" id="IPR002136">
    <property type="entry name" value="Ribosomal_uL4"/>
</dbReference>
<dbReference type="InterPro" id="IPR013005">
    <property type="entry name" value="Ribosomal_uL4-like"/>
</dbReference>
<dbReference type="InterPro" id="IPR023574">
    <property type="entry name" value="Ribosomal_uL4_dom_sf"/>
</dbReference>
<dbReference type="NCBIfam" id="TIGR03953">
    <property type="entry name" value="rplD_bact"/>
    <property type="match status" value="1"/>
</dbReference>
<dbReference type="PANTHER" id="PTHR10746">
    <property type="entry name" value="50S RIBOSOMAL PROTEIN L4"/>
    <property type="match status" value="1"/>
</dbReference>
<dbReference type="PANTHER" id="PTHR10746:SF6">
    <property type="entry name" value="LARGE RIBOSOMAL SUBUNIT PROTEIN UL4M"/>
    <property type="match status" value="1"/>
</dbReference>
<dbReference type="Pfam" id="PF00573">
    <property type="entry name" value="Ribosomal_L4"/>
    <property type="match status" value="1"/>
</dbReference>
<dbReference type="SUPFAM" id="SSF52166">
    <property type="entry name" value="Ribosomal protein L4"/>
    <property type="match status" value="1"/>
</dbReference>
<reference key="1">
    <citation type="journal article" date="2008" name="J. Biotechnol.">
        <title>The genome of Xanthomonas campestris pv. campestris B100 and its use for the reconstruction of metabolic pathways involved in xanthan biosynthesis.</title>
        <authorList>
            <person name="Vorhoelter F.-J."/>
            <person name="Schneiker S."/>
            <person name="Goesmann A."/>
            <person name="Krause L."/>
            <person name="Bekel T."/>
            <person name="Kaiser O."/>
            <person name="Linke B."/>
            <person name="Patschkowski T."/>
            <person name="Rueckert C."/>
            <person name="Schmid J."/>
            <person name="Sidhu V.K."/>
            <person name="Sieber V."/>
            <person name="Tauch A."/>
            <person name="Watt S.A."/>
            <person name="Weisshaar B."/>
            <person name="Becker A."/>
            <person name="Niehaus K."/>
            <person name="Puehler A."/>
        </authorList>
    </citation>
    <scope>NUCLEOTIDE SEQUENCE [LARGE SCALE GENOMIC DNA]</scope>
    <source>
        <strain>B100</strain>
    </source>
</reference>
<protein>
    <recommendedName>
        <fullName evidence="1">Large ribosomal subunit protein uL4</fullName>
    </recommendedName>
    <alternativeName>
        <fullName evidence="3">50S ribosomal protein L4</fullName>
    </alternativeName>
</protein>
<organism>
    <name type="scientific">Xanthomonas campestris pv. campestris (strain B100)</name>
    <dbReference type="NCBI Taxonomy" id="509169"/>
    <lineage>
        <taxon>Bacteria</taxon>
        <taxon>Pseudomonadati</taxon>
        <taxon>Pseudomonadota</taxon>
        <taxon>Gammaproteobacteria</taxon>
        <taxon>Lysobacterales</taxon>
        <taxon>Lysobacteraceae</taxon>
        <taxon>Xanthomonas</taxon>
    </lineage>
</organism>
<proteinExistence type="inferred from homology"/>
<gene>
    <name evidence="1" type="primary">rplD</name>
    <name type="ordered locus">xcc-b100_3458</name>
</gene>
<keyword id="KW-0687">Ribonucleoprotein</keyword>
<keyword id="KW-0689">Ribosomal protein</keyword>
<keyword id="KW-0694">RNA-binding</keyword>
<keyword id="KW-0699">rRNA-binding</keyword>
<name>RL4_XANCB</name>
<sequence length="201" mass="21789">MELVITGSNNKVSVSDAVFGREFSEDLVHQVVVAYRNAGRAGTKAQKTRSEVAGTTKKSKKQKGGGARHGALTAPIFVGGGVTFAAKPRSFEQKVNRKMYRAAICAIFSELNRQGRLMIVDSFDIEATKTKGLIEKLKGMDVGKRPLIVTEEASEHLYLSARNLPYVQVRDVQGLDPVALVGADTVVITADAVKKVEEWLA</sequence>
<accession>B0RU81</accession>
<comment type="function">
    <text evidence="1">One of the primary rRNA binding proteins, this protein initially binds near the 5'-end of the 23S rRNA. It is important during the early stages of 50S assembly. It makes multiple contacts with different domains of the 23S rRNA in the assembled 50S subunit and ribosome.</text>
</comment>
<comment type="function">
    <text evidence="1">Forms part of the polypeptide exit tunnel.</text>
</comment>
<comment type="subunit">
    <text evidence="1">Part of the 50S ribosomal subunit.</text>
</comment>
<comment type="similarity">
    <text evidence="1">Belongs to the universal ribosomal protein uL4 family.</text>
</comment>
<feature type="chain" id="PRO_1000142206" description="Large ribosomal subunit protein uL4">
    <location>
        <begin position="1"/>
        <end position="201"/>
    </location>
</feature>
<feature type="region of interest" description="Disordered" evidence="2">
    <location>
        <begin position="44"/>
        <end position="68"/>
    </location>
</feature>
<evidence type="ECO:0000255" key="1">
    <source>
        <dbReference type="HAMAP-Rule" id="MF_01328"/>
    </source>
</evidence>
<evidence type="ECO:0000256" key="2">
    <source>
        <dbReference type="SAM" id="MobiDB-lite"/>
    </source>
</evidence>
<evidence type="ECO:0000305" key="3"/>